<protein>
    <recommendedName>
        <fullName>Plasma membrane fusion protein prm1</fullName>
    </recommendedName>
</protein>
<gene>
    <name type="primary">prm1</name>
    <name type="ORF">AN5614</name>
</gene>
<organism>
    <name type="scientific">Emericella nidulans (strain FGSC A4 / ATCC 38163 / CBS 112.46 / NRRL 194 / M139)</name>
    <name type="common">Aspergillus nidulans</name>
    <dbReference type="NCBI Taxonomy" id="227321"/>
    <lineage>
        <taxon>Eukaryota</taxon>
        <taxon>Fungi</taxon>
        <taxon>Dikarya</taxon>
        <taxon>Ascomycota</taxon>
        <taxon>Pezizomycotina</taxon>
        <taxon>Eurotiomycetes</taxon>
        <taxon>Eurotiomycetidae</taxon>
        <taxon>Eurotiales</taxon>
        <taxon>Aspergillaceae</taxon>
        <taxon>Aspergillus</taxon>
        <taxon>Aspergillus subgen. Nidulantes</taxon>
    </lineage>
</organism>
<accession>Q5B1G6</accession>
<accession>C8VFY4</accession>
<name>PRM1_EMENI</name>
<keyword id="KW-1003">Cell membrane</keyword>
<keyword id="KW-0184">Conjugation</keyword>
<keyword id="KW-0325">Glycoprotein</keyword>
<keyword id="KW-0472">Membrane</keyword>
<keyword id="KW-1185">Reference proteome</keyword>
<keyword id="KW-0812">Transmembrane</keyword>
<keyword id="KW-1133">Transmembrane helix</keyword>
<proteinExistence type="inferred from homology"/>
<reference key="1">
    <citation type="journal article" date="2005" name="Nature">
        <title>Sequencing of Aspergillus nidulans and comparative analysis with A. fumigatus and A. oryzae.</title>
        <authorList>
            <person name="Galagan J.E."/>
            <person name="Calvo S.E."/>
            <person name="Cuomo C."/>
            <person name="Ma L.-J."/>
            <person name="Wortman J.R."/>
            <person name="Batzoglou S."/>
            <person name="Lee S.-I."/>
            <person name="Bastuerkmen M."/>
            <person name="Spevak C.C."/>
            <person name="Clutterbuck J."/>
            <person name="Kapitonov V."/>
            <person name="Jurka J."/>
            <person name="Scazzocchio C."/>
            <person name="Farman M.L."/>
            <person name="Butler J."/>
            <person name="Purcell S."/>
            <person name="Harris S."/>
            <person name="Braus G.H."/>
            <person name="Draht O."/>
            <person name="Busch S."/>
            <person name="D'Enfert C."/>
            <person name="Bouchier C."/>
            <person name="Goldman G.H."/>
            <person name="Bell-Pedersen D."/>
            <person name="Griffiths-Jones S."/>
            <person name="Doonan J.H."/>
            <person name="Yu J."/>
            <person name="Vienken K."/>
            <person name="Pain A."/>
            <person name="Freitag M."/>
            <person name="Selker E.U."/>
            <person name="Archer D.B."/>
            <person name="Penalva M.A."/>
            <person name="Oakley B.R."/>
            <person name="Momany M."/>
            <person name="Tanaka T."/>
            <person name="Kumagai T."/>
            <person name="Asai K."/>
            <person name="Machida M."/>
            <person name="Nierman W.C."/>
            <person name="Denning D.W."/>
            <person name="Caddick M.X."/>
            <person name="Hynes M."/>
            <person name="Paoletti M."/>
            <person name="Fischer R."/>
            <person name="Miller B.L."/>
            <person name="Dyer P.S."/>
            <person name="Sachs M.S."/>
            <person name="Osmani S.A."/>
            <person name="Birren B.W."/>
        </authorList>
    </citation>
    <scope>NUCLEOTIDE SEQUENCE [LARGE SCALE GENOMIC DNA]</scope>
    <source>
        <strain>FGSC A4 / ATCC 38163 / CBS 112.46 / NRRL 194 / M139</strain>
    </source>
</reference>
<reference key="2">
    <citation type="journal article" date="2009" name="Fungal Genet. Biol.">
        <title>The 2008 update of the Aspergillus nidulans genome annotation: a community effort.</title>
        <authorList>
            <person name="Wortman J.R."/>
            <person name="Gilsenan J.M."/>
            <person name="Joardar V."/>
            <person name="Deegan J."/>
            <person name="Clutterbuck J."/>
            <person name="Andersen M.R."/>
            <person name="Archer D."/>
            <person name="Bencina M."/>
            <person name="Braus G."/>
            <person name="Coutinho P."/>
            <person name="von Dohren H."/>
            <person name="Doonan J."/>
            <person name="Driessen A.J."/>
            <person name="Durek P."/>
            <person name="Espeso E."/>
            <person name="Fekete E."/>
            <person name="Flipphi M."/>
            <person name="Estrada C.G."/>
            <person name="Geysens S."/>
            <person name="Goldman G."/>
            <person name="de Groot P.W."/>
            <person name="Hansen K."/>
            <person name="Harris S.D."/>
            <person name="Heinekamp T."/>
            <person name="Helmstaedt K."/>
            <person name="Henrissat B."/>
            <person name="Hofmann G."/>
            <person name="Homan T."/>
            <person name="Horio T."/>
            <person name="Horiuchi H."/>
            <person name="James S."/>
            <person name="Jones M."/>
            <person name="Karaffa L."/>
            <person name="Karanyi Z."/>
            <person name="Kato M."/>
            <person name="Keller N."/>
            <person name="Kelly D.E."/>
            <person name="Kiel J.A."/>
            <person name="Kim J.M."/>
            <person name="van der Klei I.J."/>
            <person name="Klis F.M."/>
            <person name="Kovalchuk A."/>
            <person name="Krasevec N."/>
            <person name="Kubicek C.P."/>
            <person name="Liu B."/>
            <person name="Maccabe A."/>
            <person name="Meyer V."/>
            <person name="Mirabito P."/>
            <person name="Miskei M."/>
            <person name="Mos M."/>
            <person name="Mullins J."/>
            <person name="Nelson D.R."/>
            <person name="Nielsen J."/>
            <person name="Oakley B.R."/>
            <person name="Osmani S.A."/>
            <person name="Pakula T."/>
            <person name="Paszewski A."/>
            <person name="Paulsen I."/>
            <person name="Pilsyk S."/>
            <person name="Pocsi I."/>
            <person name="Punt P.J."/>
            <person name="Ram A.F."/>
            <person name="Ren Q."/>
            <person name="Robellet X."/>
            <person name="Robson G."/>
            <person name="Seiboth B."/>
            <person name="van Solingen P."/>
            <person name="Specht T."/>
            <person name="Sun J."/>
            <person name="Taheri-Talesh N."/>
            <person name="Takeshita N."/>
            <person name="Ussery D."/>
            <person name="vanKuyk P.A."/>
            <person name="Visser H."/>
            <person name="van de Vondervoort P.J."/>
            <person name="de Vries R.P."/>
            <person name="Walton J."/>
            <person name="Xiang X."/>
            <person name="Xiong Y."/>
            <person name="Zeng A.P."/>
            <person name="Brandt B.W."/>
            <person name="Cornell M.J."/>
            <person name="van den Hondel C.A."/>
            <person name="Visser J."/>
            <person name="Oliver S.G."/>
            <person name="Turner G."/>
        </authorList>
    </citation>
    <scope>GENOME REANNOTATION</scope>
    <source>
        <strain>FGSC A4 / ATCC 38163 / CBS 112.46 / NRRL 194 / M139</strain>
    </source>
</reference>
<feature type="chain" id="PRO_0000337281" description="Plasma membrane fusion protein prm1">
    <location>
        <begin position="1"/>
        <end position="739"/>
    </location>
</feature>
<feature type="topological domain" description="Extracellular" evidence="1">
    <location>
        <begin position="1"/>
        <end position="52"/>
    </location>
</feature>
<feature type="transmembrane region" description="Helical" evidence="2">
    <location>
        <begin position="53"/>
        <end position="73"/>
    </location>
</feature>
<feature type="topological domain" description="Cytoplasmic" evidence="1">
    <location>
        <begin position="74"/>
        <end position="135"/>
    </location>
</feature>
<feature type="transmembrane region" description="Helical" evidence="2">
    <location>
        <begin position="136"/>
        <end position="156"/>
    </location>
</feature>
<feature type="topological domain" description="Extracellular" evidence="1">
    <location>
        <begin position="157"/>
        <end position="320"/>
    </location>
</feature>
<feature type="transmembrane region" description="Helical" evidence="2">
    <location>
        <begin position="321"/>
        <end position="341"/>
    </location>
</feature>
<feature type="topological domain" description="Cytoplasmic" evidence="1">
    <location>
        <begin position="342"/>
        <end position="394"/>
    </location>
</feature>
<feature type="transmembrane region" description="Helical" evidence="2">
    <location>
        <begin position="395"/>
        <end position="417"/>
    </location>
</feature>
<feature type="topological domain" description="Extracellular" evidence="1">
    <location>
        <begin position="418"/>
        <end position="600"/>
    </location>
</feature>
<feature type="transmembrane region" description="Helical" evidence="2">
    <location>
        <begin position="601"/>
        <end position="621"/>
    </location>
</feature>
<feature type="topological domain" description="Cytoplasmic" evidence="1">
    <location>
        <begin position="622"/>
        <end position="739"/>
    </location>
</feature>
<feature type="region of interest" description="Disordered" evidence="3">
    <location>
        <begin position="634"/>
        <end position="697"/>
    </location>
</feature>
<feature type="compositionally biased region" description="Polar residues" evidence="3">
    <location>
        <begin position="662"/>
        <end position="677"/>
    </location>
</feature>
<feature type="glycosylation site" description="N-linked (GlcNAc...) asparagine" evidence="2">
    <location>
        <position position="175"/>
    </location>
</feature>
<feature type="glycosylation site" description="N-linked (GlcNAc...) asparagine" evidence="2">
    <location>
        <position position="244"/>
    </location>
</feature>
<feature type="glycosylation site" description="N-linked (GlcNAc...) asparagine" evidence="2">
    <location>
        <position position="273"/>
    </location>
</feature>
<feature type="glycosylation site" description="N-linked (GlcNAc...) asparagine" evidence="2">
    <location>
        <position position="309"/>
    </location>
</feature>
<feature type="glycosylation site" description="N-linked (GlcNAc...) asparagine" evidence="2">
    <location>
        <position position="453"/>
    </location>
</feature>
<feature type="glycosylation site" description="N-linked (GlcNAc...) asparagine" evidence="2">
    <location>
        <position position="482"/>
    </location>
</feature>
<feature type="glycosylation site" description="N-linked (GlcNAc...) asparagine" evidence="2">
    <location>
        <position position="489"/>
    </location>
</feature>
<feature type="glycosylation site" description="N-linked (GlcNAc...) asparagine" evidence="2">
    <location>
        <position position="504"/>
    </location>
</feature>
<feature type="glycosylation site" description="N-linked (GlcNAc...) asparagine" evidence="2">
    <location>
        <position position="551"/>
    </location>
</feature>
<feature type="glycosylation site" description="N-linked (GlcNAc...) asparagine" evidence="2">
    <location>
        <position position="566"/>
    </location>
</feature>
<evidence type="ECO:0000250" key="1"/>
<evidence type="ECO:0000255" key="2"/>
<evidence type="ECO:0000256" key="3">
    <source>
        <dbReference type="SAM" id="MobiDB-lite"/>
    </source>
</evidence>
<evidence type="ECO:0000305" key="4"/>
<sequence length="739" mass="79983">MIFSRSARSIFPLLPPYGAHDPQGGRAVPLQPDDITPYMGLRARLSQIWMNRWTILLLLVLVRVLIAIASLNTNMDSARREALSACTSVESMGSAMASMPHYSARGINELTASGVETAVSALKTMLTLVVSGVEELIVFFIKMMYQTYLCLITMAVRGTVDVGVGLLKDASDFLNSTIKSIGEGISDATQTFEDGLNKFVDGINIVGSVFGGDEVPDLDLSSFIEDLENAQLPSSIDDGLDKLNDSVPTFDEVSEFVENIIRTPFDEVKKLINESMGTFTFDRDTLPVPAKKQLSFCKGSDGIDSFFNNVSDIAETAKKVFIAVLVIAAVLVCFPMAWQEIRRWRAQKERSQLVRKEAHDPLDVVYIVSRPYSAAAGIKAASRFSNSRRQILVRWVIAYATSPSALFVLSLAIAGLFACLCQYLLLRAVEEAVPELSAEVGAFADKVVASLDNTSAEWALSANSAIGDINTELNDKVFGWVNSTTTGVNDTLNTFVDKTTGVLNDTFGGTLLYDPLKDVFDCLIGLKIAGIQRGLTWVHDNAHIDFPELSNDTFSRGAAESLSDDNSSESFLSDAGASTSNKITEVVFRVTSAIESGIATEALISGAILLIWFLNLLFGLIRALSLFRSHDRNRGDGGPGPAANLDPNDGFSDVPLTAIPNPHTTAHSAADSQSRSQPVPEYEPPSRNFASAGPPAAVTAQTTYEDEKLGFAGQRRNALKVSVIDARASSYPEFGDEKR</sequence>
<comment type="function">
    <text evidence="1">Involved in cell fusion during mating by stabilizing the plasma membrane fusion event.</text>
</comment>
<comment type="subcellular location">
    <subcellularLocation>
        <location evidence="1">Cell membrane</location>
        <topology evidence="1">Multi-pass membrane protein</topology>
    </subcellularLocation>
</comment>
<comment type="similarity">
    <text evidence="4">Belongs to the PRM1 family.</text>
</comment>
<dbReference type="EMBL" id="AACD01000098">
    <property type="protein sequence ID" value="EAA62707.1"/>
    <property type="molecule type" value="Genomic_DNA"/>
</dbReference>
<dbReference type="EMBL" id="BN001305">
    <property type="protein sequence ID" value="CBF81547.1"/>
    <property type="molecule type" value="Genomic_DNA"/>
</dbReference>
<dbReference type="RefSeq" id="XP_663218.1">
    <property type="nucleotide sequence ID" value="XM_658126.1"/>
</dbReference>
<dbReference type="FunCoup" id="Q5B1G6">
    <property type="interactions" value="30"/>
</dbReference>
<dbReference type="STRING" id="227321.Q5B1G6"/>
<dbReference type="TCDB" id="9.B.63.1.3">
    <property type="family name" value="the yeast pheromone-induced plasma membrane mating cell fusion protein (prm1) family"/>
</dbReference>
<dbReference type="GlyCosmos" id="Q5B1G6">
    <property type="glycosylation" value="10 sites, No reported glycans"/>
</dbReference>
<dbReference type="EnsemblFungi" id="CBF81547">
    <property type="protein sequence ID" value="CBF81547"/>
    <property type="gene ID" value="ANIA_05614"/>
</dbReference>
<dbReference type="KEGG" id="ani:ANIA_05614"/>
<dbReference type="VEuPathDB" id="FungiDB:AN5614"/>
<dbReference type="eggNOG" id="ENOG502QRP5">
    <property type="taxonomic scope" value="Eukaryota"/>
</dbReference>
<dbReference type="HOGENOM" id="CLU_010191_1_0_1"/>
<dbReference type="InParanoid" id="Q5B1G6"/>
<dbReference type="OMA" id="NVFGWVN"/>
<dbReference type="OrthoDB" id="5356111at2759"/>
<dbReference type="Proteomes" id="UP000000560">
    <property type="component" value="Chromosome V"/>
</dbReference>
<dbReference type="GO" id="GO:0043332">
    <property type="term" value="C:mating projection tip"/>
    <property type="evidence" value="ECO:0000318"/>
    <property type="project" value="GO_Central"/>
</dbReference>
<dbReference type="GO" id="GO:0005886">
    <property type="term" value="C:plasma membrane"/>
    <property type="evidence" value="ECO:0007669"/>
    <property type="project" value="UniProtKB-SubCell"/>
</dbReference>
<dbReference type="GO" id="GO:0032220">
    <property type="term" value="P:plasma membrane fusion involved in cytogamy"/>
    <property type="evidence" value="ECO:0000318"/>
    <property type="project" value="GO_Central"/>
</dbReference>
<dbReference type="InterPro" id="IPR026777">
    <property type="entry name" value="PRM1"/>
</dbReference>
<dbReference type="PANTHER" id="PTHR31030">
    <property type="entry name" value="PLASMA MEMBRANE FUSION PROTEIN PRM1"/>
    <property type="match status" value="1"/>
</dbReference>
<dbReference type="PANTHER" id="PTHR31030:SF1">
    <property type="entry name" value="PLASMA MEMBRANE FUSION PROTEIN PRM1"/>
    <property type="match status" value="1"/>
</dbReference>